<accession>A8FLU3</accession>
<accession>P94644</accession>
<accession>Q0PA04</accession>
<accession>Q9PP37</accession>
<name>ISPH_CAMJ8</name>
<keyword id="KW-0004">4Fe-4S</keyword>
<keyword id="KW-0408">Iron</keyword>
<keyword id="KW-0411">Iron-sulfur</keyword>
<keyword id="KW-0414">Isoprene biosynthesis</keyword>
<keyword id="KW-0479">Metal-binding</keyword>
<keyword id="KW-0560">Oxidoreductase</keyword>
<feature type="chain" id="PRO_0000315384" description="4-hydroxy-3-methylbut-2-enyl diphosphate reductase">
    <location>
        <begin position="1"/>
        <end position="277"/>
    </location>
</feature>
<feature type="active site" description="Proton donor" evidence="1">
    <location>
        <position position="122"/>
    </location>
</feature>
<feature type="binding site" evidence="1">
    <location>
        <position position="12"/>
    </location>
    <ligand>
        <name>[4Fe-4S] cluster</name>
        <dbReference type="ChEBI" id="CHEBI:49883"/>
    </ligand>
</feature>
<feature type="binding site" evidence="1">
    <location>
        <position position="36"/>
    </location>
    <ligand>
        <name>(2E)-4-hydroxy-3-methylbut-2-enyl diphosphate</name>
        <dbReference type="ChEBI" id="CHEBI:128753"/>
    </ligand>
</feature>
<feature type="binding site" evidence="1">
    <location>
        <position position="36"/>
    </location>
    <ligand>
        <name>dimethylallyl diphosphate</name>
        <dbReference type="ChEBI" id="CHEBI:57623"/>
    </ligand>
</feature>
<feature type="binding site" evidence="1">
    <location>
        <position position="36"/>
    </location>
    <ligand>
        <name>isopentenyl diphosphate</name>
        <dbReference type="ChEBI" id="CHEBI:128769"/>
    </ligand>
</feature>
<feature type="binding site" evidence="1">
    <location>
        <position position="70"/>
    </location>
    <ligand>
        <name>(2E)-4-hydroxy-3-methylbut-2-enyl diphosphate</name>
        <dbReference type="ChEBI" id="CHEBI:128753"/>
    </ligand>
</feature>
<feature type="binding site" evidence="1">
    <location>
        <position position="70"/>
    </location>
    <ligand>
        <name>dimethylallyl diphosphate</name>
        <dbReference type="ChEBI" id="CHEBI:57623"/>
    </ligand>
</feature>
<feature type="binding site" evidence="1">
    <location>
        <position position="70"/>
    </location>
    <ligand>
        <name>isopentenyl diphosphate</name>
        <dbReference type="ChEBI" id="CHEBI:128769"/>
    </ligand>
</feature>
<feature type="binding site" evidence="1">
    <location>
        <position position="92"/>
    </location>
    <ligand>
        <name>[4Fe-4S] cluster</name>
        <dbReference type="ChEBI" id="CHEBI:49883"/>
    </ligand>
</feature>
<feature type="binding site" evidence="1">
    <location>
        <position position="120"/>
    </location>
    <ligand>
        <name>(2E)-4-hydroxy-3-methylbut-2-enyl diphosphate</name>
        <dbReference type="ChEBI" id="CHEBI:128753"/>
    </ligand>
</feature>
<feature type="binding site" evidence="1">
    <location>
        <position position="120"/>
    </location>
    <ligand>
        <name>dimethylallyl diphosphate</name>
        <dbReference type="ChEBI" id="CHEBI:57623"/>
    </ligand>
</feature>
<feature type="binding site" evidence="1">
    <location>
        <position position="120"/>
    </location>
    <ligand>
        <name>isopentenyl diphosphate</name>
        <dbReference type="ChEBI" id="CHEBI:128769"/>
    </ligand>
</feature>
<feature type="binding site" evidence="1">
    <location>
        <position position="158"/>
    </location>
    <ligand>
        <name>(2E)-4-hydroxy-3-methylbut-2-enyl diphosphate</name>
        <dbReference type="ChEBI" id="CHEBI:128753"/>
    </ligand>
</feature>
<feature type="binding site" evidence="1">
    <location>
        <position position="186"/>
    </location>
    <ligand>
        <name>[4Fe-4S] cluster</name>
        <dbReference type="ChEBI" id="CHEBI:49883"/>
    </ligand>
</feature>
<feature type="binding site" evidence="1">
    <location>
        <position position="214"/>
    </location>
    <ligand>
        <name>(2E)-4-hydroxy-3-methylbut-2-enyl diphosphate</name>
        <dbReference type="ChEBI" id="CHEBI:128753"/>
    </ligand>
</feature>
<feature type="binding site" evidence="1">
    <location>
        <position position="214"/>
    </location>
    <ligand>
        <name>dimethylallyl diphosphate</name>
        <dbReference type="ChEBI" id="CHEBI:57623"/>
    </ligand>
</feature>
<feature type="binding site" evidence="1">
    <location>
        <position position="214"/>
    </location>
    <ligand>
        <name>isopentenyl diphosphate</name>
        <dbReference type="ChEBI" id="CHEBI:128769"/>
    </ligand>
</feature>
<feature type="binding site" evidence="1">
    <location>
        <position position="216"/>
    </location>
    <ligand>
        <name>(2E)-4-hydroxy-3-methylbut-2-enyl diphosphate</name>
        <dbReference type="ChEBI" id="CHEBI:128753"/>
    </ligand>
</feature>
<feature type="binding site" evidence="1">
    <location>
        <position position="216"/>
    </location>
    <ligand>
        <name>dimethylallyl diphosphate</name>
        <dbReference type="ChEBI" id="CHEBI:57623"/>
    </ligand>
</feature>
<feature type="binding site" evidence="1">
    <location>
        <position position="216"/>
    </location>
    <ligand>
        <name>isopentenyl diphosphate</name>
        <dbReference type="ChEBI" id="CHEBI:128769"/>
    </ligand>
</feature>
<feature type="binding site" evidence="1">
    <location>
        <position position="258"/>
    </location>
    <ligand>
        <name>(2E)-4-hydroxy-3-methylbut-2-enyl diphosphate</name>
        <dbReference type="ChEBI" id="CHEBI:128753"/>
    </ligand>
</feature>
<feature type="binding site" evidence="1">
    <location>
        <position position="258"/>
    </location>
    <ligand>
        <name>dimethylallyl diphosphate</name>
        <dbReference type="ChEBI" id="CHEBI:57623"/>
    </ligand>
</feature>
<feature type="binding site" evidence="1">
    <location>
        <position position="258"/>
    </location>
    <ligand>
        <name>isopentenyl diphosphate</name>
        <dbReference type="ChEBI" id="CHEBI:128769"/>
    </ligand>
</feature>
<reference key="1">
    <citation type="submission" date="1997-12" db="EMBL/GenBank/DDBJ databases">
        <authorList>
            <person name="Woesten M.M.S.M."/>
        </authorList>
    </citation>
    <scope>NUCLEOTIDE SEQUENCE [GENOMIC DNA]</scope>
</reference>
<reference key="2">
    <citation type="journal article" date="2007" name="J. Bacteriol.">
        <title>The complete genome sequence of Campylobacter jejuni strain 81116 (NCTC11828).</title>
        <authorList>
            <person name="Pearson B.M."/>
            <person name="Gaskin D.J.H."/>
            <person name="Segers R.P.A.M."/>
            <person name="Wells J.M."/>
            <person name="Nuijten P.J.M."/>
            <person name="van Vliet A.H.M."/>
        </authorList>
    </citation>
    <scope>NUCLEOTIDE SEQUENCE [LARGE SCALE GENOMIC DNA]</scope>
    <source>
        <strain>81116 / NCTC 11828</strain>
    </source>
</reference>
<gene>
    <name evidence="1" type="primary">ispH</name>
    <name type="synonym">lytB</name>
    <name type="ordered locus">C8J_0831</name>
</gene>
<proteinExistence type="inferred from homology"/>
<evidence type="ECO:0000255" key="1">
    <source>
        <dbReference type="HAMAP-Rule" id="MF_00191"/>
    </source>
</evidence>
<protein>
    <recommendedName>
        <fullName evidence="1">4-hydroxy-3-methylbut-2-enyl diphosphate reductase</fullName>
        <shortName evidence="1">HMBPP reductase</shortName>
        <ecNumber evidence="1">1.17.7.4</ecNumber>
    </recommendedName>
</protein>
<comment type="function">
    <text evidence="1">Catalyzes the conversion of 1-hydroxy-2-methyl-2-(E)-butenyl 4-diphosphate (HMBPP) into a mixture of isopentenyl diphosphate (IPP) and dimethylallyl diphosphate (DMAPP). Acts in the terminal step of the DOXP/MEP pathway for isoprenoid precursor biosynthesis.</text>
</comment>
<comment type="catalytic activity">
    <reaction evidence="1">
        <text>isopentenyl diphosphate + 2 oxidized [2Fe-2S]-[ferredoxin] + H2O = (2E)-4-hydroxy-3-methylbut-2-enyl diphosphate + 2 reduced [2Fe-2S]-[ferredoxin] + 2 H(+)</text>
        <dbReference type="Rhea" id="RHEA:24488"/>
        <dbReference type="Rhea" id="RHEA-COMP:10000"/>
        <dbReference type="Rhea" id="RHEA-COMP:10001"/>
        <dbReference type="ChEBI" id="CHEBI:15377"/>
        <dbReference type="ChEBI" id="CHEBI:15378"/>
        <dbReference type="ChEBI" id="CHEBI:33737"/>
        <dbReference type="ChEBI" id="CHEBI:33738"/>
        <dbReference type="ChEBI" id="CHEBI:128753"/>
        <dbReference type="ChEBI" id="CHEBI:128769"/>
        <dbReference type="EC" id="1.17.7.4"/>
    </reaction>
</comment>
<comment type="catalytic activity">
    <reaction evidence="1">
        <text>dimethylallyl diphosphate + 2 oxidized [2Fe-2S]-[ferredoxin] + H2O = (2E)-4-hydroxy-3-methylbut-2-enyl diphosphate + 2 reduced [2Fe-2S]-[ferredoxin] + 2 H(+)</text>
        <dbReference type="Rhea" id="RHEA:24825"/>
        <dbReference type="Rhea" id="RHEA-COMP:10000"/>
        <dbReference type="Rhea" id="RHEA-COMP:10001"/>
        <dbReference type="ChEBI" id="CHEBI:15377"/>
        <dbReference type="ChEBI" id="CHEBI:15378"/>
        <dbReference type="ChEBI" id="CHEBI:33737"/>
        <dbReference type="ChEBI" id="CHEBI:33738"/>
        <dbReference type="ChEBI" id="CHEBI:57623"/>
        <dbReference type="ChEBI" id="CHEBI:128753"/>
        <dbReference type="EC" id="1.17.7.4"/>
    </reaction>
</comment>
<comment type="cofactor">
    <cofactor evidence="1">
        <name>[4Fe-4S] cluster</name>
        <dbReference type="ChEBI" id="CHEBI:49883"/>
    </cofactor>
    <text evidence="1">Binds 1 [4Fe-4S] cluster per subunit.</text>
</comment>
<comment type="pathway">
    <text evidence="1">Isoprenoid biosynthesis; dimethylallyl diphosphate biosynthesis; dimethylallyl diphosphate from (2E)-4-hydroxy-3-methylbutenyl diphosphate: step 1/1.</text>
</comment>
<comment type="pathway">
    <text evidence="1">Isoprenoid biosynthesis; isopentenyl diphosphate biosynthesis via DXP pathway; isopentenyl diphosphate from 1-deoxy-D-xylulose 5-phosphate: step 6/6.</text>
</comment>
<comment type="similarity">
    <text evidence="1">Belongs to the IspH family.</text>
</comment>
<sequence length="277" mass="31523">MIIELAKNYGFCFGVKRAIKKAEQIKDAATIGPLIHNNEEISRLQKNFNVKTLENIQALSNEKKAIIRTHGITKQDLEELRKKDIEIFDATCPFVTKPQQICEQMSKEGYEVVIFGDENHPEVKGVKSYVSTKAYVVLDKKELQNIKLPNKIAVVSQTTKKPEHFMEIVNFLILKTKEVRVFNTICDATFKNQDAIKELSLKSDVMVVVGGKNSANTKQLFLIAKTNCEDSYLIETEEELKKEWFLDKKHCGISAGASTPDWIIQKVIAKIENFKIN</sequence>
<organism>
    <name type="scientific">Campylobacter jejuni subsp. jejuni serotype O:6 (strain 81116 / NCTC 11828)</name>
    <dbReference type="NCBI Taxonomy" id="407148"/>
    <lineage>
        <taxon>Bacteria</taxon>
        <taxon>Pseudomonadati</taxon>
        <taxon>Campylobacterota</taxon>
        <taxon>Epsilonproteobacteria</taxon>
        <taxon>Campylobacterales</taxon>
        <taxon>Campylobacteraceae</taxon>
        <taxon>Campylobacter</taxon>
    </lineage>
</organism>
<dbReference type="EC" id="1.17.7.4" evidence="1"/>
<dbReference type="EMBL" id="X89371">
    <property type="protein sequence ID" value="CAA61555.1"/>
    <property type="molecule type" value="Genomic_DNA"/>
</dbReference>
<dbReference type="EMBL" id="CP000814">
    <property type="protein sequence ID" value="ABV52430.1"/>
    <property type="molecule type" value="Genomic_DNA"/>
</dbReference>
<dbReference type="PIR" id="PC4273">
    <property type="entry name" value="PC4273"/>
</dbReference>
<dbReference type="RefSeq" id="WP_002857098.1">
    <property type="nucleotide sequence ID" value="NC_009839.1"/>
</dbReference>
<dbReference type="SMR" id="A8FLU3"/>
<dbReference type="KEGG" id="cju:C8J_0831"/>
<dbReference type="HOGENOM" id="CLU_027486_0_1_7"/>
<dbReference type="UniPathway" id="UPA00056">
    <property type="reaction ID" value="UER00097"/>
</dbReference>
<dbReference type="UniPathway" id="UPA00059">
    <property type="reaction ID" value="UER00105"/>
</dbReference>
<dbReference type="GO" id="GO:0051539">
    <property type="term" value="F:4 iron, 4 sulfur cluster binding"/>
    <property type="evidence" value="ECO:0007669"/>
    <property type="project" value="UniProtKB-UniRule"/>
</dbReference>
<dbReference type="GO" id="GO:0051745">
    <property type="term" value="F:4-hydroxy-3-methylbut-2-enyl diphosphate reductase activity"/>
    <property type="evidence" value="ECO:0007669"/>
    <property type="project" value="UniProtKB-UniRule"/>
</dbReference>
<dbReference type="GO" id="GO:0046872">
    <property type="term" value="F:metal ion binding"/>
    <property type="evidence" value="ECO:0007669"/>
    <property type="project" value="UniProtKB-KW"/>
</dbReference>
<dbReference type="GO" id="GO:0050992">
    <property type="term" value="P:dimethylallyl diphosphate biosynthetic process"/>
    <property type="evidence" value="ECO:0007669"/>
    <property type="project" value="UniProtKB-UniRule"/>
</dbReference>
<dbReference type="GO" id="GO:0019288">
    <property type="term" value="P:isopentenyl diphosphate biosynthetic process, methylerythritol 4-phosphate pathway"/>
    <property type="evidence" value="ECO:0007669"/>
    <property type="project" value="UniProtKB-UniRule"/>
</dbReference>
<dbReference type="GO" id="GO:0016114">
    <property type="term" value="P:terpenoid biosynthetic process"/>
    <property type="evidence" value="ECO:0007669"/>
    <property type="project" value="UniProtKB-UniRule"/>
</dbReference>
<dbReference type="CDD" id="cd13944">
    <property type="entry name" value="lytB_ispH"/>
    <property type="match status" value="1"/>
</dbReference>
<dbReference type="Gene3D" id="3.40.50.11270">
    <property type="match status" value="1"/>
</dbReference>
<dbReference type="Gene3D" id="3.40.1010.20">
    <property type="entry name" value="4-hydroxy-3-methylbut-2-enyl diphosphate reductase, catalytic domain"/>
    <property type="match status" value="2"/>
</dbReference>
<dbReference type="HAMAP" id="MF_00191">
    <property type="entry name" value="IspH"/>
    <property type="match status" value="1"/>
</dbReference>
<dbReference type="InterPro" id="IPR003451">
    <property type="entry name" value="LytB/IspH"/>
</dbReference>
<dbReference type="NCBIfam" id="TIGR00216">
    <property type="entry name" value="ispH_lytB"/>
    <property type="match status" value="1"/>
</dbReference>
<dbReference type="NCBIfam" id="NF002187">
    <property type="entry name" value="PRK01045.1-1"/>
    <property type="match status" value="1"/>
</dbReference>
<dbReference type="PANTHER" id="PTHR30426">
    <property type="entry name" value="4-HYDROXY-3-METHYLBUT-2-ENYL DIPHOSPHATE REDUCTASE"/>
    <property type="match status" value="1"/>
</dbReference>
<dbReference type="PANTHER" id="PTHR30426:SF0">
    <property type="entry name" value="4-HYDROXY-3-METHYLBUT-2-ENYL DIPHOSPHATE REDUCTASE"/>
    <property type="match status" value="1"/>
</dbReference>
<dbReference type="Pfam" id="PF02401">
    <property type="entry name" value="LYTB"/>
    <property type="match status" value="1"/>
</dbReference>